<accession>Q4J985</accession>
<evidence type="ECO:0000255" key="1">
    <source>
        <dbReference type="HAMAP-Rule" id="MF_01387"/>
    </source>
</evidence>
<keyword id="KW-0158">Chromosome</keyword>
<keyword id="KW-0963">Cytoplasm</keyword>
<keyword id="KW-0238">DNA-binding</keyword>
<keyword id="KW-0488">Methylation</keyword>
<keyword id="KW-1185">Reference proteome</keyword>
<feature type="chain" id="PRO_0000345176" description="Chromatin protein Cren7">
    <location>
        <begin position="1"/>
        <end position="59"/>
    </location>
</feature>
<sequence>MSEKKRVRVRTPGGKELELTPEKTWVLAPKGRKGVKIGLFKDPESGKYFRHKLPDDYPV</sequence>
<reference key="1">
    <citation type="journal article" date="2005" name="J. Bacteriol.">
        <title>The genome of Sulfolobus acidocaldarius, a model organism of the Crenarchaeota.</title>
        <authorList>
            <person name="Chen L."/>
            <person name="Bruegger K."/>
            <person name="Skovgaard M."/>
            <person name="Redder P."/>
            <person name="She Q."/>
            <person name="Torarinsson E."/>
            <person name="Greve B."/>
            <person name="Awayez M."/>
            <person name="Zibat A."/>
            <person name="Klenk H.-P."/>
            <person name="Garrett R.A."/>
        </authorList>
    </citation>
    <scope>NUCLEOTIDE SEQUENCE [LARGE SCALE GENOMIC DNA]</scope>
    <source>
        <strain>ATCC 33909 / DSM 639 / JCM 8929 / NBRC 15157 / NCIMB 11770</strain>
    </source>
</reference>
<gene>
    <name evidence="1" type="primary">creN7</name>
    <name type="ordered locus">Saci_1307</name>
</gene>
<comment type="function">
    <text evidence="1">A chromatin protein, binds double-stranded DNA without sequence specificity. Constrains negative DNA supercoils.</text>
</comment>
<comment type="subunit">
    <text evidence="1">Monomer.</text>
</comment>
<comment type="subcellular location">
    <subcellularLocation>
        <location evidence="1">Chromosome</location>
    </subcellularLocation>
    <subcellularLocation>
        <location evidence="1">Cytoplasm</location>
    </subcellularLocation>
</comment>
<comment type="PTM">
    <text evidence="1">Methylated at multiple sites, to varying extents.</text>
</comment>
<comment type="similarity">
    <text evidence="1">Belongs to the Cren7 family.</text>
</comment>
<dbReference type="EMBL" id="CP000077">
    <property type="protein sequence ID" value="AAY80645.1"/>
    <property type="molecule type" value="Genomic_DNA"/>
</dbReference>
<dbReference type="RefSeq" id="WP_011278147.1">
    <property type="nucleotide sequence ID" value="NC_007181.1"/>
</dbReference>
<dbReference type="SMR" id="Q4J985"/>
<dbReference type="STRING" id="330779.Saci_1307"/>
<dbReference type="GeneID" id="14551812"/>
<dbReference type="KEGG" id="sai:Saci_1307"/>
<dbReference type="PATRIC" id="fig|330779.12.peg.1261"/>
<dbReference type="eggNOG" id="arCOG04114">
    <property type="taxonomic scope" value="Archaea"/>
</dbReference>
<dbReference type="HOGENOM" id="CLU_2911298_0_0_2"/>
<dbReference type="Proteomes" id="UP000001018">
    <property type="component" value="Chromosome"/>
</dbReference>
<dbReference type="GO" id="GO:0005694">
    <property type="term" value="C:chromosome"/>
    <property type="evidence" value="ECO:0007669"/>
    <property type="project" value="UniProtKB-SubCell"/>
</dbReference>
<dbReference type="GO" id="GO:0005737">
    <property type="term" value="C:cytoplasm"/>
    <property type="evidence" value="ECO:0007669"/>
    <property type="project" value="UniProtKB-SubCell"/>
</dbReference>
<dbReference type="GO" id="GO:0003690">
    <property type="term" value="F:double-stranded DNA binding"/>
    <property type="evidence" value="ECO:0007669"/>
    <property type="project" value="UniProtKB-UniRule"/>
</dbReference>
<dbReference type="Gene3D" id="2.30.30.610">
    <property type="entry name" value="Chromatin protein Cren7"/>
    <property type="match status" value="1"/>
</dbReference>
<dbReference type="HAMAP" id="MF_01387">
    <property type="entry name" value="Chromatin_Cren7"/>
    <property type="match status" value="1"/>
</dbReference>
<dbReference type="InterPro" id="IPR038647">
    <property type="entry name" value="Cren7_sf"/>
</dbReference>
<dbReference type="InterPro" id="IPR020906">
    <property type="entry name" value="dsDNA-bd_Cren7"/>
</dbReference>
<dbReference type="Pfam" id="PF11520">
    <property type="entry name" value="Cren7"/>
    <property type="match status" value="1"/>
</dbReference>
<organism>
    <name type="scientific">Sulfolobus acidocaldarius (strain ATCC 33909 / DSM 639 / JCM 8929 / NBRC 15157 / NCIMB 11770)</name>
    <dbReference type="NCBI Taxonomy" id="330779"/>
    <lineage>
        <taxon>Archaea</taxon>
        <taxon>Thermoproteota</taxon>
        <taxon>Thermoprotei</taxon>
        <taxon>Sulfolobales</taxon>
        <taxon>Sulfolobaceae</taxon>
        <taxon>Sulfolobus</taxon>
    </lineage>
</organism>
<protein>
    <recommendedName>
        <fullName evidence="1">Chromatin protein Cren7</fullName>
    </recommendedName>
</protein>
<name>CREN7_SULAC</name>
<proteinExistence type="inferred from homology"/>